<name>RAD54_DROMO</name>
<proteinExistence type="inferred from homology"/>
<comment type="function">
    <text evidence="2">Involved in mitotic DNA repair and meiotic recombination. Functions in the recombinational DNA repair pathway. Essential for interhomolog gene conversion (GC), but may have a less important role in intersister GC than spn-A/Rad51. In the presence of DNA, spn-A/Rad51 enhances the ATPase activity of okr/Rad54 (By similarity).</text>
</comment>
<comment type="subunit">
    <text evidence="1">Interacts (via N-terminus) with spn-A/Rad51.</text>
</comment>
<comment type="subcellular location">
    <subcellularLocation>
        <location evidence="2">Nucleus</location>
    </subcellularLocation>
</comment>
<comment type="similarity">
    <text evidence="3">Belongs to the SNF2/RAD54 helicase family.</text>
</comment>
<organism>
    <name type="scientific">Drosophila mojavensis</name>
    <name type="common">Fruit fly</name>
    <dbReference type="NCBI Taxonomy" id="7230"/>
    <lineage>
        <taxon>Eukaryota</taxon>
        <taxon>Metazoa</taxon>
        <taxon>Ecdysozoa</taxon>
        <taxon>Arthropoda</taxon>
        <taxon>Hexapoda</taxon>
        <taxon>Insecta</taxon>
        <taxon>Pterygota</taxon>
        <taxon>Neoptera</taxon>
        <taxon>Endopterygota</taxon>
        <taxon>Diptera</taxon>
        <taxon>Brachycera</taxon>
        <taxon>Muscomorpha</taxon>
        <taxon>Ephydroidea</taxon>
        <taxon>Drosophilidae</taxon>
        <taxon>Drosophila</taxon>
    </lineage>
</organism>
<sequence>MRRSLAPSQRLGVRIKSKDAFTPPLQKKNKRVCQEELQKRQSALRDATNRVELPLPIRFTANSEYEQAIAKVLARKFKVPIANYVPDYGGNRTLGVRRTIVRRALHDPQACNALVLYVPPAYTEHERMSMDPSKVQVHVVVDPILSNVLRPHQREGVRFMYECVEGKRGNFNGCIMADEMGLGKTLQCVTLTWTLLRQSPDCKPTISKAIIVSPSSLVKNWEKEFTKWLHGRMHCLAMEGGSKEDTTRALEQFAMNTATRCGTPVLLISYETFRLYAHILCKTEVGMVICDEGHRLKNSDNLTYQALMGLKTKRRVLLSGTPIQNDLTEYFSLVNFVNPEMLGTAADFKRNFENSILRGQNADSTDAERQRALQKTQELIGLVNQCIIRRTNQILTKYLPVKFEMVVCVKLTPVQLQIYTNFLKSDQVRRSLADCNEKASLTALADITTLKKLCNHPDLIYEKIAAKEKGFENSQNVLPPNYKPKDVNPELSGKFMLLDFMLAAIRANSDDKVVLISNYTQTLDLFEQLARKRKYTYVRLDGTMTIKKRSKVVDRFNDPSTDCFLFMLSSKAGGCGLNLIGANRLFMFDPDWNPANDEQAMARVWRDGQKKPCYIYRLVASGSIEEKILQRQTHKKSLSSTIIDNNESSEKHFTRDDLKDLFSFEANVLSDTHNKLKCKRCFQDVQRQPPAENTDCTSHLSQWFHCSNNRGLPDSILSQAWTASKCVSFVFHHRSQAESKPAAITEDDESEQQQQSPKRTSKNDDNDEDFDPENSAEEQFLGF</sequence>
<evidence type="ECO:0000250" key="1"/>
<evidence type="ECO:0000250" key="2">
    <source>
        <dbReference type="UniProtKB" id="O76460"/>
    </source>
</evidence>
<evidence type="ECO:0000255" key="3"/>
<evidence type="ECO:0000255" key="4">
    <source>
        <dbReference type="PROSITE-ProRule" id="PRU00541"/>
    </source>
</evidence>
<evidence type="ECO:0000255" key="5">
    <source>
        <dbReference type="PROSITE-ProRule" id="PRU00542"/>
    </source>
</evidence>
<evidence type="ECO:0000256" key="6">
    <source>
        <dbReference type="SAM" id="MobiDB-lite"/>
    </source>
</evidence>
<evidence type="ECO:0000312" key="7">
    <source>
        <dbReference type="EMBL" id="EDW12294.1"/>
    </source>
</evidence>
<protein>
    <recommendedName>
        <fullName evidence="2">DNA repair and recombination protein RAD54-like</fullName>
        <ecNumber>3.6.4.-</ecNumber>
    </recommendedName>
    <alternativeName>
        <fullName evidence="2">Protein okra</fullName>
    </alternativeName>
</protein>
<feature type="chain" id="PRO_0000392523" description="DNA repair and recombination protein RAD54-like">
    <location>
        <begin position="1"/>
        <end position="783"/>
    </location>
</feature>
<feature type="domain" description="Helicase ATP-binding" evidence="4">
    <location>
        <begin position="165"/>
        <end position="340"/>
    </location>
</feature>
<feature type="domain" description="Helicase C-terminal" evidence="5">
    <location>
        <begin position="497"/>
        <end position="654"/>
    </location>
</feature>
<feature type="region of interest" description="Required for chromatin remodeling, strand pairing activities and coupling of ATPase activity" evidence="2">
    <location>
        <begin position="2"/>
        <end position="9"/>
    </location>
</feature>
<feature type="region of interest" description="Disordered" evidence="6">
    <location>
        <begin position="737"/>
        <end position="783"/>
    </location>
</feature>
<feature type="short sequence motif" description="DEGH box" evidence="3">
    <location>
        <begin position="291"/>
        <end position="294"/>
    </location>
</feature>
<feature type="compositionally biased region" description="Acidic residues" evidence="6">
    <location>
        <begin position="765"/>
        <end position="776"/>
    </location>
</feature>
<feature type="binding site" evidence="4">
    <location>
        <begin position="178"/>
        <end position="185"/>
    </location>
    <ligand>
        <name>ATP</name>
        <dbReference type="ChEBI" id="CHEBI:30616"/>
    </ligand>
</feature>
<feature type="modified residue" description="Phosphothreonine" evidence="2">
    <location>
        <position position="22"/>
    </location>
</feature>
<keyword id="KW-0067">ATP-binding</keyword>
<keyword id="KW-0131">Cell cycle</keyword>
<keyword id="KW-0132">Cell division</keyword>
<keyword id="KW-0227">DNA damage</keyword>
<keyword id="KW-0234">DNA repair</keyword>
<keyword id="KW-0238">DNA-binding</keyword>
<keyword id="KW-0347">Helicase</keyword>
<keyword id="KW-0378">Hydrolase</keyword>
<keyword id="KW-0469">Meiosis</keyword>
<keyword id="KW-0498">Mitosis</keyword>
<keyword id="KW-0547">Nucleotide-binding</keyword>
<keyword id="KW-0539">Nucleus</keyword>
<keyword id="KW-0597">Phosphoprotein</keyword>
<keyword id="KW-1185">Reference proteome</keyword>
<reference evidence="7" key="1">
    <citation type="journal article" date="2007" name="Nature">
        <title>Evolution of genes and genomes on the Drosophila phylogeny.</title>
        <authorList>
            <consortium name="Drosophila 12 genomes consortium"/>
        </authorList>
    </citation>
    <scope>NUCLEOTIDE SEQUENCE [LARGE SCALE GENOMIC DNA]</scope>
    <source>
        <strain evidence="7">Tucson 15081-1352.22</strain>
    </source>
</reference>
<accession>B4KHL5</accession>
<dbReference type="EC" id="3.6.4.-"/>
<dbReference type="EMBL" id="CH933807">
    <property type="protein sequence ID" value="EDW12294.1"/>
    <property type="molecule type" value="Genomic_DNA"/>
</dbReference>
<dbReference type="SMR" id="B4KHL5"/>
<dbReference type="FunCoup" id="B4KHL5">
    <property type="interactions" value="1193"/>
</dbReference>
<dbReference type="EnsemblMetazoa" id="FBtr0161485">
    <property type="protein sequence ID" value="FBpp0159977"/>
    <property type="gene ID" value="FBgn0133523"/>
</dbReference>
<dbReference type="EnsemblMetazoa" id="XM_002002816.4">
    <property type="protein sequence ID" value="XP_002002852.1"/>
    <property type="gene ID" value="LOC6576868"/>
</dbReference>
<dbReference type="GeneID" id="6576868"/>
<dbReference type="KEGG" id="dmo:Dmoj_GI10760"/>
<dbReference type="CTD" id="33507"/>
<dbReference type="eggNOG" id="KOG0390">
    <property type="taxonomic scope" value="Eukaryota"/>
</dbReference>
<dbReference type="HOGENOM" id="CLU_000315_10_2_1"/>
<dbReference type="InParanoid" id="B4KHL5"/>
<dbReference type="OMA" id="YTEHERM"/>
<dbReference type="OrthoDB" id="413460at2759"/>
<dbReference type="PhylomeDB" id="B4KHL5"/>
<dbReference type="ChiTaRS" id="okr">
    <property type="organism name" value="fly"/>
</dbReference>
<dbReference type="Proteomes" id="UP000009192">
    <property type="component" value="Unassembled WGS sequence"/>
</dbReference>
<dbReference type="GO" id="GO:0005634">
    <property type="term" value="C:nucleus"/>
    <property type="evidence" value="ECO:0000250"/>
    <property type="project" value="UniProtKB"/>
</dbReference>
<dbReference type="GO" id="GO:0005524">
    <property type="term" value="F:ATP binding"/>
    <property type="evidence" value="ECO:0007669"/>
    <property type="project" value="UniProtKB-KW"/>
</dbReference>
<dbReference type="GO" id="GO:0016887">
    <property type="term" value="F:ATP hydrolysis activity"/>
    <property type="evidence" value="ECO:0007669"/>
    <property type="project" value="EnsemblMetazoa"/>
</dbReference>
<dbReference type="GO" id="GO:0140658">
    <property type="term" value="F:ATP-dependent chromatin remodeler activity"/>
    <property type="evidence" value="ECO:0007669"/>
    <property type="project" value="EnsemblMetazoa"/>
</dbReference>
<dbReference type="GO" id="GO:0003677">
    <property type="term" value="F:DNA binding"/>
    <property type="evidence" value="ECO:0007669"/>
    <property type="project" value="UniProtKB-KW"/>
</dbReference>
<dbReference type="GO" id="GO:0015616">
    <property type="term" value="F:DNA translocase activity"/>
    <property type="evidence" value="ECO:0007669"/>
    <property type="project" value="TreeGrafter"/>
</dbReference>
<dbReference type="GO" id="GO:0004386">
    <property type="term" value="F:helicase activity"/>
    <property type="evidence" value="ECO:0007669"/>
    <property type="project" value="UniProtKB-KW"/>
</dbReference>
<dbReference type="GO" id="GO:0051301">
    <property type="term" value="P:cell division"/>
    <property type="evidence" value="ECO:0007669"/>
    <property type="project" value="UniProtKB-KW"/>
</dbReference>
<dbReference type="GO" id="GO:0006338">
    <property type="term" value="P:chromatin remodeling"/>
    <property type="evidence" value="ECO:0000250"/>
    <property type="project" value="UniProtKB"/>
</dbReference>
<dbReference type="GO" id="GO:0043150">
    <property type="term" value="P:DNA synthesis involved in double-strand break repair via homologous recombination"/>
    <property type="evidence" value="ECO:0000250"/>
    <property type="project" value="UniProtKB"/>
</dbReference>
<dbReference type="GO" id="GO:0000724">
    <property type="term" value="P:double-strand break repair via homologous recombination"/>
    <property type="evidence" value="ECO:0000250"/>
    <property type="project" value="UniProtKB"/>
</dbReference>
<dbReference type="GO" id="GO:0045003">
    <property type="term" value="P:double-strand break repair via synthesis-dependent strand annealing"/>
    <property type="evidence" value="ECO:0007669"/>
    <property type="project" value="EnsemblMetazoa"/>
</dbReference>
<dbReference type="GO" id="GO:0000711">
    <property type="term" value="P:meiotic DNA repair synthesis"/>
    <property type="evidence" value="ECO:0000250"/>
    <property type="project" value="UniProtKB"/>
</dbReference>
<dbReference type="GO" id="GO:0030716">
    <property type="term" value="P:oocyte fate determination"/>
    <property type="evidence" value="ECO:0007669"/>
    <property type="project" value="EnsemblMetazoa"/>
</dbReference>
<dbReference type="GO" id="GO:0048477">
    <property type="term" value="P:oogenesis"/>
    <property type="evidence" value="ECO:0007669"/>
    <property type="project" value="EnsemblMetazoa"/>
</dbReference>
<dbReference type="GO" id="GO:0007131">
    <property type="term" value="P:reciprocal meiotic recombination"/>
    <property type="evidence" value="ECO:0007669"/>
    <property type="project" value="EnsemblMetazoa"/>
</dbReference>
<dbReference type="GO" id="GO:0010212">
    <property type="term" value="P:response to ionizing radiation"/>
    <property type="evidence" value="ECO:0000250"/>
    <property type="project" value="UniProtKB"/>
</dbReference>
<dbReference type="CDD" id="cd18067">
    <property type="entry name" value="DEXHc_RAD54A"/>
    <property type="match status" value="1"/>
</dbReference>
<dbReference type="CDD" id="cd18793">
    <property type="entry name" value="SF2_C_SNF"/>
    <property type="match status" value="1"/>
</dbReference>
<dbReference type="FunFam" id="3.40.50.10810:FF:000010">
    <property type="entry name" value="DNA repair and recombination protein RAD54-like"/>
    <property type="match status" value="1"/>
</dbReference>
<dbReference type="FunFam" id="3.40.50.300:FF:000332">
    <property type="entry name" value="DNA repair and recombination protein RAD54-like"/>
    <property type="match status" value="1"/>
</dbReference>
<dbReference type="Gene3D" id="3.40.50.300">
    <property type="entry name" value="P-loop containing nucleotide triphosphate hydrolases"/>
    <property type="match status" value="1"/>
</dbReference>
<dbReference type="Gene3D" id="1.20.120.850">
    <property type="entry name" value="SWI2/SNF2 ATPases, N-terminal domain"/>
    <property type="match status" value="1"/>
</dbReference>
<dbReference type="Gene3D" id="3.40.50.10810">
    <property type="entry name" value="Tandem AAA-ATPase domain"/>
    <property type="match status" value="1"/>
</dbReference>
<dbReference type="InterPro" id="IPR014001">
    <property type="entry name" value="Helicase_ATP-bd"/>
</dbReference>
<dbReference type="InterPro" id="IPR001650">
    <property type="entry name" value="Helicase_C-like"/>
</dbReference>
<dbReference type="InterPro" id="IPR027417">
    <property type="entry name" value="P-loop_NTPase"/>
</dbReference>
<dbReference type="InterPro" id="IPR013967">
    <property type="entry name" value="Rad54_N"/>
</dbReference>
<dbReference type="InterPro" id="IPR038718">
    <property type="entry name" value="SNF2-like_sf"/>
</dbReference>
<dbReference type="InterPro" id="IPR049730">
    <property type="entry name" value="SNF2/RAD54-like_C"/>
</dbReference>
<dbReference type="InterPro" id="IPR000330">
    <property type="entry name" value="SNF2_N"/>
</dbReference>
<dbReference type="InterPro" id="IPR050496">
    <property type="entry name" value="SNF2_RAD54_helicase_repair"/>
</dbReference>
<dbReference type="PANTHER" id="PTHR45629:SF7">
    <property type="entry name" value="DNA EXCISION REPAIR PROTEIN ERCC-6-RELATED"/>
    <property type="match status" value="1"/>
</dbReference>
<dbReference type="PANTHER" id="PTHR45629">
    <property type="entry name" value="SNF2/RAD54 FAMILY MEMBER"/>
    <property type="match status" value="1"/>
</dbReference>
<dbReference type="Pfam" id="PF00271">
    <property type="entry name" value="Helicase_C"/>
    <property type="match status" value="1"/>
</dbReference>
<dbReference type="Pfam" id="PF08658">
    <property type="entry name" value="Rad54_N"/>
    <property type="match status" value="1"/>
</dbReference>
<dbReference type="Pfam" id="PF00176">
    <property type="entry name" value="SNF2-rel_dom"/>
    <property type="match status" value="1"/>
</dbReference>
<dbReference type="SMART" id="SM00487">
    <property type="entry name" value="DEXDc"/>
    <property type="match status" value="1"/>
</dbReference>
<dbReference type="SMART" id="SM00490">
    <property type="entry name" value="HELICc"/>
    <property type="match status" value="1"/>
</dbReference>
<dbReference type="SUPFAM" id="SSF52540">
    <property type="entry name" value="P-loop containing nucleoside triphosphate hydrolases"/>
    <property type="match status" value="2"/>
</dbReference>
<dbReference type="PROSITE" id="PS51192">
    <property type="entry name" value="HELICASE_ATP_BIND_1"/>
    <property type="match status" value="1"/>
</dbReference>
<dbReference type="PROSITE" id="PS51194">
    <property type="entry name" value="HELICASE_CTER"/>
    <property type="match status" value="1"/>
</dbReference>
<gene>
    <name evidence="2" type="primary">okr</name>
    <name type="ORF">GI10760</name>
</gene>